<protein>
    <recommendedName>
        <fullName evidence="4">SKA complex subunit 3</fullName>
    </recommendedName>
    <alternativeName>
        <fullName>Spindle and kinetochore-associated protein 3</fullName>
    </alternativeName>
</protein>
<feature type="chain" id="PRO_0000373899" description="SKA complex subunit 3">
    <location>
        <begin position="1"/>
        <end position="556"/>
    </location>
</feature>
<feature type="region of interest" description="Disordered" evidence="3">
    <location>
        <begin position="105"/>
        <end position="135"/>
    </location>
</feature>
<feature type="compositionally biased region" description="Basic and acidic residues" evidence="3">
    <location>
        <begin position="118"/>
        <end position="134"/>
    </location>
</feature>
<reference key="1">
    <citation type="submission" date="2008-03" db="EMBL/GenBank/DDBJ databases">
        <authorList>
            <consortium name="NIH - Xenopus Gene Collection (XGC) project"/>
        </authorList>
    </citation>
    <scope>NUCLEOTIDE SEQUENCE [LARGE SCALE MRNA]</scope>
    <source>
        <tissue>Ovary</tissue>
    </source>
</reference>
<organism>
    <name type="scientific">Xenopus laevis</name>
    <name type="common">African clawed frog</name>
    <dbReference type="NCBI Taxonomy" id="8355"/>
    <lineage>
        <taxon>Eukaryota</taxon>
        <taxon>Metazoa</taxon>
        <taxon>Chordata</taxon>
        <taxon>Craniata</taxon>
        <taxon>Vertebrata</taxon>
        <taxon>Euteleostomi</taxon>
        <taxon>Amphibia</taxon>
        <taxon>Batrachia</taxon>
        <taxon>Anura</taxon>
        <taxon>Pipoidea</taxon>
        <taxon>Pipidae</taxon>
        <taxon>Xenopodinae</taxon>
        <taxon>Xenopus</taxon>
        <taxon>Xenopus</taxon>
    </lineage>
</organism>
<name>SKA3_XENLA</name>
<proteinExistence type="evidence at transcript level"/>
<gene>
    <name type="primary">ska3</name>
    <name type="synonym">rama1</name>
</gene>
<keyword id="KW-0131">Cell cycle</keyword>
<keyword id="KW-0132">Cell division</keyword>
<keyword id="KW-0137">Centromere</keyword>
<keyword id="KW-0158">Chromosome</keyword>
<keyword id="KW-0963">Cytoplasm</keyword>
<keyword id="KW-0206">Cytoskeleton</keyword>
<keyword id="KW-0995">Kinetochore</keyword>
<keyword id="KW-0493">Microtubule</keyword>
<keyword id="KW-0498">Mitosis</keyword>
<keyword id="KW-1185">Reference proteome</keyword>
<evidence type="ECO:0000250" key="1">
    <source>
        <dbReference type="UniProtKB" id="Q8C263"/>
    </source>
</evidence>
<evidence type="ECO:0000250" key="2">
    <source>
        <dbReference type="UniProtKB" id="Q8IX90"/>
    </source>
</evidence>
<evidence type="ECO:0000256" key="3">
    <source>
        <dbReference type="SAM" id="MobiDB-lite"/>
    </source>
</evidence>
<evidence type="ECO:0000305" key="4"/>
<comment type="function">
    <text evidence="1 2">Component of the SKA complex, a microtubule plus end-binding complex of the outer kinetochore that stabilizes spindle microtubule-kinetochore attachments, promotes alignment of chromosomes at the mitotic spindle equator (chromosome congression) and assists suppression of the spindle assembly checkpoint. Kinetochores, consisting of a centromere-associated inner segment and a microtubule-contacting outer segment, play a crucial role in chromosome segregation by mediating the physical connection between centromeric DNA and spindle microtubules. The outer kinetochore is made up of the ten-subunit KMN network complex, comprising the MIS12, NDC80 and KNL1 complexes, and auxiliary microtubule-associated components such as the SKA complex; together they connect the outer kinetochore with the inner kinetochore, bind microtubules, and mediate interactions with mitotic checkpoint proteins that delay anaphase until chromosomes are bioriented on the spindle. The SKA complex is loaded onto bioriented kinetochores and it facilitates chromosome congression by stabilizing microtubules, and end-on attachment of the NDC80 complex to depolymerizing spindle microtubules, thereby assisting the poleward-moving kinetochore in withstanding microtubule pulling forces. The complex associates with dynamic microtubule plus-ends and can track both depolymerizing and elongating microtubules. The complex recruits protein phosphatase 1 (PP1) to the kinetochore in prometaphase and metaphase, to oppose spindle assembly checkpoint signaling and promote the onset of anaphase. Within the complex, binds microtubules but with a much lower affinity than SKA1 (By similarity). During meiosis the SKA complex stabilizes the meiotic spindle and is required for its migration to the cortex (By similarity).</text>
</comment>
<comment type="subunit">
    <text evidence="2">Component of the SKA complex, composed of ska1, ska2 and ska3.</text>
</comment>
<comment type="subcellular location">
    <subcellularLocation>
        <location evidence="2">Cytoplasm</location>
        <location evidence="2">Cytoskeleton</location>
        <location evidence="2">Spindle</location>
    </subcellularLocation>
    <subcellularLocation>
        <location evidence="2">Chromosome</location>
        <location evidence="2">Centromere</location>
        <location evidence="2">Kinetochore</location>
    </subcellularLocation>
</comment>
<comment type="similarity">
    <text evidence="4">Belongs to the SKA3 family.</text>
</comment>
<accession>B1H1S4</accession>
<sequence length="556" mass="62718">MSVTGNFFSKLRSLALTLEKETAQLEQVFGNEDNEYEEESPMRVLHDLRSDIMVLKGDFQSTLDKKLTRGQELSAFIKACRVLHERSAADIEQIKETFQTYGYKPLCNDNSENEQTQESEKPKDNDVSPRKADAEDLPILEKAASTSWDLLRAPQLSDFGLSHYQLPTAWEPPKVKPCPKNPEEEKPRIMYKDPEPINVAKTPKCALRLEEDFSQIQHFGISDCSTNLNDDYTIALINKNFQKKQNDTENETCQAKNLKSLLATPSHLSHRMDCVDSPLPPVFFTPGLKVHKKETISLPGKTGERQGLNAADTDSTLLSGTCDRKDSDNAHLEDVHECTAMKPAMDLKSISAAPPYLSLGSNFDSVYSPRPPVFCTPGLKTHKKETSSVLVEPKEVTGCSDTPPLPSFQTNWLKNDTTEKALDITEPVPRPELSYRQYLEEPPSLVLNSNKYEAPAMTEYDIGTPTRPEMTVSLTEDLFKYNVKPSSPPKMSEYEKMLWTPIRPEMTSCITEDISQILSKYCDNNTNVADKEMWNKAGASFGKISSEYEDKENRQY</sequence>
<dbReference type="EMBL" id="BC160719">
    <property type="protein sequence ID" value="AAI60719.1"/>
    <property type="molecule type" value="mRNA"/>
</dbReference>
<dbReference type="RefSeq" id="NP_001121221.1">
    <property type="nucleotide sequence ID" value="NM_001127749.1"/>
</dbReference>
<dbReference type="SMR" id="B1H1S4"/>
<dbReference type="GeneID" id="100158292"/>
<dbReference type="KEGG" id="xla:100158292"/>
<dbReference type="AGR" id="Xenbase:XB-GENE-994921"/>
<dbReference type="CTD" id="100158292"/>
<dbReference type="Xenbase" id="XB-GENE-994921">
    <property type="gene designation" value="ska3.L"/>
</dbReference>
<dbReference type="OrthoDB" id="5987638at2759"/>
<dbReference type="Proteomes" id="UP000186698">
    <property type="component" value="Chromosome 2L"/>
</dbReference>
<dbReference type="Bgee" id="100158292">
    <property type="expression patterns" value="Expressed in testis and 15 other cell types or tissues"/>
</dbReference>
<dbReference type="GO" id="GO:0005737">
    <property type="term" value="C:cytoplasm"/>
    <property type="evidence" value="ECO:0007669"/>
    <property type="project" value="UniProtKB-KW"/>
</dbReference>
<dbReference type="GO" id="GO:0000776">
    <property type="term" value="C:kinetochore"/>
    <property type="evidence" value="ECO:0000250"/>
    <property type="project" value="UniProtKB"/>
</dbReference>
<dbReference type="GO" id="GO:0072687">
    <property type="term" value="C:meiotic spindle"/>
    <property type="evidence" value="ECO:0000250"/>
    <property type="project" value="UniProtKB"/>
</dbReference>
<dbReference type="GO" id="GO:0072686">
    <property type="term" value="C:mitotic spindle"/>
    <property type="evidence" value="ECO:0000250"/>
    <property type="project" value="UniProtKB"/>
</dbReference>
<dbReference type="GO" id="GO:0000940">
    <property type="term" value="C:outer kinetochore"/>
    <property type="evidence" value="ECO:0000250"/>
    <property type="project" value="UniProtKB"/>
</dbReference>
<dbReference type="GO" id="GO:0005876">
    <property type="term" value="C:spindle microtubule"/>
    <property type="evidence" value="ECO:0000250"/>
    <property type="project" value="UniProtKB"/>
</dbReference>
<dbReference type="GO" id="GO:0008017">
    <property type="term" value="F:microtubule binding"/>
    <property type="evidence" value="ECO:0000250"/>
    <property type="project" value="UniProtKB"/>
</dbReference>
<dbReference type="GO" id="GO:0051315">
    <property type="term" value="P:attachment of mitotic spindle microtubules to kinetochore"/>
    <property type="evidence" value="ECO:0000250"/>
    <property type="project" value="UniProtKB"/>
</dbReference>
<dbReference type="GO" id="GO:0051301">
    <property type="term" value="P:cell division"/>
    <property type="evidence" value="ECO:0007669"/>
    <property type="project" value="UniProtKB-KW"/>
</dbReference>
<dbReference type="GO" id="GO:0007059">
    <property type="term" value="P:chromosome segregation"/>
    <property type="evidence" value="ECO:0000318"/>
    <property type="project" value="GO_Central"/>
</dbReference>
<dbReference type="GO" id="GO:0000278">
    <property type="term" value="P:mitotic cell cycle"/>
    <property type="evidence" value="ECO:0000318"/>
    <property type="project" value="GO_Central"/>
</dbReference>
<dbReference type="GO" id="GO:0007080">
    <property type="term" value="P:mitotic metaphase chromosome alignment"/>
    <property type="evidence" value="ECO:0000250"/>
    <property type="project" value="UniProtKB"/>
</dbReference>
<dbReference type="GO" id="GO:0000070">
    <property type="term" value="P:mitotic sister chromatid segregation"/>
    <property type="evidence" value="ECO:0000250"/>
    <property type="project" value="UniProtKB"/>
</dbReference>
<dbReference type="GO" id="GO:0031110">
    <property type="term" value="P:regulation of microtubule polymerization or depolymerization"/>
    <property type="evidence" value="ECO:0000250"/>
    <property type="project" value="UniProtKB"/>
</dbReference>
<dbReference type="CDD" id="cd12957">
    <property type="entry name" value="SKA3_N"/>
    <property type="match status" value="1"/>
</dbReference>
<dbReference type="Gene3D" id="6.10.250.1400">
    <property type="match status" value="1"/>
</dbReference>
<dbReference type="InterPro" id="IPR033341">
    <property type="entry name" value="SKA3"/>
</dbReference>
<dbReference type="PANTHER" id="PTHR48118">
    <property type="entry name" value="SPINDLE AND KINETOCHORE-ASSOCIATED PROTEIN 3"/>
    <property type="match status" value="1"/>
</dbReference>
<dbReference type="PANTHER" id="PTHR48118:SF1">
    <property type="entry name" value="SPINDLE AND KINETOCHORE-ASSOCIATED PROTEIN 3"/>
    <property type="match status" value="1"/>
</dbReference>